<feature type="chain" id="PRO_0000328575" description="MOB kinase activator-like 1 homolog B">
    <location>
        <begin position="1"/>
        <end position="216"/>
    </location>
</feature>
<feature type="binding site" evidence="1">
    <location>
        <position position="79"/>
    </location>
    <ligand>
        <name>Zn(2+)</name>
        <dbReference type="ChEBI" id="CHEBI:29105"/>
    </ligand>
</feature>
<feature type="binding site" evidence="1">
    <location>
        <position position="84"/>
    </location>
    <ligand>
        <name>Zn(2+)</name>
        <dbReference type="ChEBI" id="CHEBI:29105"/>
    </ligand>
</feature>
<feature type="binding site" evidence="1">
    <location>
        <position position="161"/>
    </location>
    <ligand>
        <name>Zn(2+)</name>
        <dbReference type="ChEBI" id="CHEBI:29105"/>
    </ligand>
</feature>
<feature type="binding site" evidence="1">
    <location>
        <position position="166"/>
    </location>
    <ligand>
        <name>Zn(2+)</name>
        <dbReference type="ChEBI" id="CHEBI:29105"/>
    </ligand>
</feature>
<sequence>MFKIFNSDKNKTFKPKKGFSKGTKRHDLHKHAKATLGSGNLRLAVSLPEREDLNEWLAVNTVDFFNQINLLYGSITEFCTPKTCEVMSAGPKYEYLWADGESVKKPIKVSAPEYVEFLMTWVQGILDDENIFPSRVDVQFPKNFQSIVKNIFKRLFRVYGHIYYSHFTKIVSLGEEAHLNTCFKHFYFFIVEFNLVDKKEMLPLQDLIDNLTKSST</sequence>
<reference key="1">
    <citation type="journal article" date="2005" name="Nature">
        <title>The genome of the social amoeba Dictyostelium discoideum.</title>
        <authorList>
            <person name="Eichinger L."/>
            <person name="Pachebat J.A."/>
            <person name="Gloeckner G."/>
            <person name="Rajandream M.A."/>
            <person name="Sucgang R."/>
            <person name="Berriman M."/>
            <person name="Song J."/>
            <person name="Olsen R."/>
            <person name="Szafranski K."/>
            <person name="Xu Q."/>
            <person name="Tunggal B."/>
            <person name="Kummerfeld S."/>
            <person name="Madera M."/>
            <person name="Konfortov B.A."/>
            <person name="Rivero F."/>
            <person name="Bankier A.T."/>
            <person name="Lehmann R."/>
            <person name="Hamlin N."/>
            <person name="Davies R."/>
            <person name="Gaudet P."/>
            <person name="Fey P."/>
            <person name="Pilcher K."/>
            <person name="Chen G."/>
            <person name="Saunders D."/>
            <person name="Sodergren E.J."/>
            <person name="Davis P."/>
            <person name="Kerhornou A."/>
            <person name="Nie X."/>
            <person name="Hall N."/>
            <person name="Anjard C."/>
            <person name="Hemphill L."/>
            <person name="Bason N."/>
            <person name="Farbrother P."/>
            <person name="Desany B."/>
            <person name="Just E."/>
            <person name="Morio T."/>
            <person name="Rost R."/>
            <person name="Churcher C.M."/>
            <person name="Cooper J."/>
            <person name="Haydock S."/>
            <person name="van Driessche N."/>
            <person name="Cronin A."/>
            <person name="Goodhead I."/>
            <person name="Muzny D.M."/>
            <person name="Mourier T."/>
            <person name="Pain A."/>
            <person name="Lu M."/>
            <person name="Harper D."/>
            <person name="Lindsay R."/>
            <person name="Hauser H."/>
            <person name="James K.D."/>
            <person name="Quiles M."/>
            <person name="Madan Babu M."/>
            <person name="Saito T."/>
            <person name="Buchrieser C."/>
            <person name="Wardroper A."/>
            <person name="Felder M."/>
            <person name="Thangavelu M."/>
            <person name="Johnson D."/>
            <person name="Knights A."/>
            <person name="Loulseged H."/>
            <person name="Mungall K.L."/>
            <person name="Oliver K."/>
            <person name="Price C."/>
            <person name="Quail M.A."/>
            <person name="Urushihara H."/>
            <person name="Hernandez J."/>
            <person name="Rabbinowitsch E."/>
            <person name="Steffen D."/>
            <person name="Sanders M."/>
            <person name="Ma J."/>
            <person name="Kohara Y."/>
            <person name="Sharp S."/>
            <person name="Simmonds M.N."/>
            <person name="Spiegler S."/>
            <person name="Tivey A."/>
            <person name="Sugano S."/>
            <person name="White B."/>
            <person name="Walker D."/>
            <person name="Woodward J.R."/>
            <person name="Winckler T."/>
            <person name="Tanaka Y."/>
            <person name="Shaulsky G."/>
            <person name="Schleicher M."/>
            <person name="Weinstock G.M."/>
            <person name="Rosenthal A."/>
            <person name="Cox E.C."/>
            <person name="Chisholm R.L."/>
            <person name="Gibbs R.A."/>
            <person name="Loomis W.F."/>
            <person name="Platzer M."/>
            <person name="Kay R.R."/>
            <person name="Williams J.G."/>
            <person name="Dear P.H."/>
            <person name="Noegel A.A."/>
            <person name="Barrell B.G."/>
            <person name="Kuspa A."/>
        </authorList>
    </citation>
    <scope>NUCLEOTIDE SEQUENCE [LARGE SCALE GENOMIC DNA]</scope>
    <source>
        <strain>AX4</strain>
    </source>
</reference>
<proteinExistence type="inferred from homology"/>
<dbReference type="EMBL" id="AAFI02000196">
    <property type="protein sequence ID" value="EAL61053.1"/>
    <property type="molecule type" value="Genomic_DNA"/>
</dbReference>
<dbReference type="RefSeq" id="XP_629473.1">
    <property type="nucleotide sequence ID" value="XM_629471.1"/>
</dbReference>
<dbReference type="SMR" id="Q54CR8"/>
<dbReference type="FunCoup" id="Q54CR8">
    <property type="interactions" value="15"/>
</dbReference>
<dbReference type="STRING" id="44689.Q54CR8"/>
<dbReference type="PaxDb" id="44689-DDB0232217"/>
<dbReference type="EnsemblProtists" id="EAL61053">
    <property type="protein sequence ID" value="EAL61053"/>
    <property type="gene ID" value="DDB_G0292758"/>
</dbReference>
<dbReference type="GeneID" id="8628863"/>
<dbReference type="KEGG" id="ddi:DDB_G0292758"/>
<dbReference type="dictyBase" id="DDB_G0292758">
    <property type="gene designation" value="mobB"/>
</dbReference>
<dbReference type="VEuPathDB" id="AmoebaDB:DDB_G0292758"/>
<dbReference type="eggNOG" id="KOG0440">
    <property type="taxonomic scope" value="Eukaryota"/>
</dbReference>
<dbReference type="HOGENOM" id="CLU_038321_3_2_1"/>
<dbReference type="InParanoid" id="Q54CR8"/>
<dbReference type="OMA" id="HKHAKAT"/>
<dbReference type="PhylomeDB" id="Q54CR8"/>
<dbReference type="PRO" id="PR:Q54CR8"/>
<dbReference type="Proteomes" id="UP000002195">
    <property type="component" value="Chromosome 6"/>
</dbReference>
<dbReference type="GO" id="GO:0005737">
    <property type="term" value="C:cytoplasm"/>
    <property type="evidence" value="ECO:0000318"/>
    <property type="project" value="GO_Central"/>
</dbReference>
<dbReference type="GO" id="GO:0005634">
    <property type="term" value="C:nucleus"/>
    <property type="evidence" value="ECO:0000318"/>
    <property type="project" value="GO_Central"/>
</dbReference>
<dbReference type="GO" id="GO:0046872">
    <property type="term" value="F:metal ion binding"/>
    <property type="evidence" value="ECO:0007669"/>
    <property type="project" value="UniProtKB-KW"/>
</dbReference>
<dbReference type="GO" id="GO:0030295">
    <property type="term" value="F:protein kinase activator activity"/>
    <property type="evidence" value="ECO:0000318"/>
    <property type="project" value="GO_Central"/>
</dbReference>
<dbReference type="GO" id="GO:0007165">
    <property type="term" value="P:signal transduction"/>
    <property type="evidence" value="ECO:0000318"/>
    <property type="project" value="GO_Central"/>
</dbReference>
<dbReference type="FunFam" id="1.20.140.30:FF:000001">
    <property type="entry name" value="MOB kinase activator 1A"/>
    <property type="match status" value="1"/>
</dbReference>
<dbReference type="Gene3D" id="1.20.140.30">
    <property type="entry name" value="MOB kinase activator"/>
    <property type="match status" value="1"/>
</dbReference>
<dbReference type="InterPro" id="IPR005301">
    <property type="entry name" value="MOB_kinase_act_fam"/>
</dbReference>
<dbReference type="InterPro" id="IPR036703">
    <property type="entry name" value="MOB_kinase_act_sf"/>
</dbReference>
<dbReference type="PANTHER" id="PTHR22599">
    <property type="entry name" value="MPS ONE BINDER KINASE ACTIVATOR-LIKE MOB"/>
    <property type="match status" value="1"/>
</dbReference>
<dbReference type="Pfam" id="PF03637">
    <property type="entry name" value="Mob1_phocein"/>
    <property type="match status" value="1"/>
</dbReference>
<dbReference type="SMART" id="SM01388">
    <property type="entry name" value="Mob1_phocein"/>
    <property type="match status" value="1"/>
</dbReference>
<dbReference type="SUPFAM" id="SSF101152">
    <property type="entry name" value="Mob1/phocein"/>
    <property type="match status" value="1"/>
</dbReference>
<comment type="similarity">
    <text evidence="2">Belongs to the MOB1/phocein family.</text>
</comment>
<name>MOB1B_DICDI</name>
<protein>
    <recommendedName>
        <fullName>MOB kinase activator-like 1 homolog B</fullName>
    </recommendedName>
    <alternativeName>
        <fullName>Mps one binder kinase activator-like 1 homolog B</fullName>
    </alternativeName>
</protein>
<organism>
    <name type="scientific">Dictyostelium discoideum</name>
    <name type="common">Social amoeba</name>
    <dbReference type="NCBI Taxonomy" id="44689"/>
    <lineage>
        <taxon>Eukaryota</taxon>
        <taxon>Amoebozoa</taxon>
        <taxon>Evosea</taxon>
        <taxon>Eumycetozoa</taxon>
        <taxon>Dictyostelia</taxon>
        <taxon>Dictyosteliales</taxon>
        <taxon>Dictyosteliaceae</taxon>
        <taxon>Dictyostelium</taxon>
    </lineage>
</organism>
<accession>Q54CR8</accession>
<gene>
    <name type="primary">mobB</name>
    <name type="ORF">DDB_G0292758</name>
</gene>
<evidence type="ECO:0000250" key="1"/>
<evidence type="ECO:0000305" key="2"/>
<keyword id="KW-0479">Metal-binding</keyword>
<keyword id="KW-1185">Reference proteome</keyword>
<keyword id="KW-0862">Zinc</keyword>